<evidence type="ECO:0000255" key="1">
    <source>
        <dbReference type="HAMAP-Rule" id="MF_01331"/>
    </source>
</evidence>
<evidence type="ECO:0000305" key="2"/>
<keyword id="KW-0687">Ribonucleoprotein</keyword>
<keyword id="KW-0689">Ribosomal protein</keyword>
<keyword id="KW-0694">RNA-binding</keyword>
<keyword id="KW-0699">rRNA-binding</keyword>
<protein>
    <recommendedName>
        <fullName evidence="1">Large ribosomal subunit protein uL22</fullName>
    </recommendedName>
    <alternativeName>
        <fullName evidence="2">50S ribosomal protein L22</fullName>
    </alternativeName>
</protein>
<comment type="function">
    <text evidence="1">This protein binds specifically to 23S rRNA; its binding is stimulated by other ribosomal proteins, e.g. L4, L17, and L20. It is important during the early stages of 50S assembly. It makes multiple contacts with different domains of the 23S rRNA in the assembled 50S subunit and ribosome (By similarity).</text>
</comment>
<comment type="function">
    <text evidence="1">The globular domain of the protein is located near the polypeptide exit tunnel on the outside of the subunit, while an extended beta-hairpin is found that lines the wall of the exit tunnel in the center of the 70S ribosome.</text>
</comment>
<comment type="subunit">
    <text evidence="1">Part of the 50S ribosomal subunit.</text>
</comment>
<comment type="similarity">
    <text evidence="1">Belongs to the universal ribosomal protein uL22 family.</text>
</comment>
<feature type="chain" id="PRO_1000142253" description="Large ribosomal subunit protein uL22">
    <location>
        <begin position="1"/>
        <end position="112"/>
    </location>
</feature>
<organism>
    <name type="scientific">Nitratidesulfovibrio vulgaris (strain DSM 19637 / Miyazaki F)</name>
    <name type="common">Desulfovibrio vulgaris</name>
    <dbReference type="NCBI Taxonomy" id="883"/>
    <lineage>
        <taxon>Bacteria</taxon>
        <taxon>Pseudomonadati</taxon>
        <taxon>Thermodesulfobacteriota</taxon>
        <taxon>Desulfovibrionia</taxon>
        <taxon>Desulfovibrionales</taxon>
        <taxon>Desulfovibrionaceae</taxon>
        <taxon>Nitratidesulfovibrio</taxon>
    </lineage>
</organism>
<name>RL22_NITV9</name>
<sequence length="112" mass="12419">MESRATAKFMRVSPRKARLVAQNVNGLPVEDAMNILKFTPNKPADIIFGVLRSALANAEQLPGIDVDAMVVKQIVINEGPTWKRFLPRAQGRATKIRKRTSHITVILAEGQE</sequence>
<reference key="1">
    <citation type="submission" date="2008-10" db="EMBL/GenBank/DDBJ databases">
        <title>Complete sequence of Desulfovibrio vulgaris str. 'Miyazaki F'.</title>
        <authorList>
            <person name="Lucas S."/>
            <person name="Copeland A."/>
            <person name="Lapidus A."/>
            <person name="Glavina del Rio T."/>
            <person name="Dalin E."/>
            <person name="Tice H."/>
            <person name="Bruce D."/>
            <person name="Goodwin L."/>
            <person name="Pitluck S."/>
            <person name="Sims D."/>
            <person name="Brettin T."/>
            <person name="Detter J.C."/>
            <person name="Han C."/>
            <person name="Larimer F."/>
            <person name="Land M."/>
            <person name="Hauser L."/>
            <person name="Kyrpides N."/>
            <person name="Mikhailova N."/>
            <person name="Hazen T.C."/>
            <person name="Richardson P."/>
        </authorList>
    </citation>
    <scope>NUCLEOTIDE SEQUENCE [LARGE SCALE GENOMIC DNA]</scope>
    <source>
        <strain>DSM 19637 / Miyazaki F</strain>
    </source>
</reference>
<proteinExistence type="inferred from homology"/>
<gene>
    <name evidence="1" type="primary">rplV</name>
    <name type="ordered locus">DvMF_0084</name>
</gene>
<dbReference type="EMBL" id="CP001197">
    <property type="protein sequence ID" value="ACL07045.1"/>
    <property type="molecule type" value="Genomic_DNA"/>
</dbReference>
<dbReference type="SMR" id="B8DNA1"/>
<dbReference type="STRING" id="883.DvMF_0084"/>
<dbReference type="KEGG" id="dvm:DvMF_0084"/>
<dbReference type="eggNOG" id="COG0091">
    <property type="taxonomic scope" value="Bacteria"/>
</dbReference>
<dbReference type="HOGENOM" id="CLU_083987_3_3_7"/>
<dbReference type="OrthoDB" id="9805969at2"/>
<dbReference type="GO" id="GO:0022625">
    <property type="term" value="C:cytosolic large ribosomal subunit"/>
    <property type="evidence" value="ECO:0007669"/>
    <property type="project" value="TreeGrafter"/>
</dbReference>
<dbReference type="GO" id="GO:0019843">
    <property type="term" value="F:rRNA binding"/>
    <property type="evidence" value="ECO:0007669"/>
    <property type="project" value="UniProtKB-UniRule"/>
</dbReference>
<dbReference type="GO" id="GO:0003735">
    <property type="term" value="F:structural constituent of ribosome"/>
    <property type="evidence" value="ECO:0007669"/>
    <property type="project" value="InterPro"/>
</dbReference>
<dbReference type="GO" id="GO:0006412">
    <property type="term" value="P:translation"/>
    <property type="evidence" value="ECO:0007669"/>
    <property type="project" value="UniProtKB-UniRule"/>
</dbReference>
<dbReference type="CDD" id="cd00336">
    <property type="entry name" value="Ribosomal_L22"/>
    <property type="match status" value="1"/>
</dbReference>
<dbReference type="Gene3D" id="3.90.470.10">
    <property type="entry name" value="Ribosomal protein L22/L17"/>
    <property type="match status" value="1"/>
</dbReference>
<dbReference type="HAMAP" id="MF_01331_B">
    <property type="entry name" value="Ribosomal_uL22_B"/>
    <property type="match status" value="1"/>
</dbReference>
<dbReference type="InterPro" id="IPR001063">
    <property type="entry name" value="Ribosomal_uL22"/>
</dbReference>
<dbReference type="InterPro" id="IPR005727">
    <property type="entry name" value="Ribosomal_uL22_bac/chlpt-type"/>
</dbReference>
<dbReference type="InterPro" id="IPR047867">
    <property type="entry name" value="Ribosomal_uL22_bac/org-type"/>
</dbReference>
<dbReference type="InterPro" id="IPR018260">
    <property type="entry name" value="Ribosomal_uL22_CS"/>
</dbReference>
<dbReference type="InterPro" id="IPR036394">
    <property type="entry name" value="Ribosomal_uL22_sf"/>
</dbReference>
<dbReference type="NCBIfam" id="TIGR01044">
    <property type="entry name" value="rplV_bact"/>
    <property type="match status" value="1"/>
</dbReference>
<dbReference type="PANTHER" id="PTHR13501">
    <property type="entry name" value="CHLOROPLAST 50S RIBOSOMAL PROTEIN L22-RELATED"/>
    <property type="match status" value="1"/>
</dbReference>
<dbReference type="PANTHER" id="PTHR13501:SF8">
    <property type="entry name" value="LARGE RIBOSOMAL SUBUNIT PROTEIN UL22M"/>
    <property type="match status" value="1"/>
</dbReference>
<dbReference type="Pfam" id="PF00237">
    <property type="entry name" value="Ribosomal_L22"/>
    <property type="match status" value="1"/>
</dbReference>
<dbReference type="SUPFAM" id="SSF54843">
    <property type="entry name" value="Ribosomal protein L22"/>
    <property type="match status" value="1"/>
</dbReference>
<dbReference type="PROSITE" id="PS00464">
    <property type="entry name" value="RIBOSOMAL_L22"/>
    <property type="match status" value="1"/>
</dbReference>
<accession>B8DNA1</accession>